<sequence>MKIDILTLFPDMFTGVFGSSILKKAQEKEAVELRVVNFRDYTTSKHNSVDDYPYGGGAGMVLTPQPIFDAVEDLTKETERKPRVVLMCPQGERFTQKKAEELAEEEHLIFVCGHYEGYDERIREHLVTDEISIGDYVLTGGELASMVITDSVVRLLPGVLGNHASQVEDSFSTGLLEHPHYTRPADFRGMKVPDVLMSGNHKNIDEWRHKESLRRTYTRRPDLLEERELSKQEKKWLEQIKEGK</sequence>
<dbReference type="EC" id="2.1.1.228" evidence="1"/>
<dbReference type="EMBL" id="CP001598">
    <property type="protein sequence ID" value="ACQ50585.1"/>
    <property type="molecule type" value="Genomic_DNA"/>
</dbReference>
<dbReference type="RefSeq" id="WP_000686892.1">
    <property type="nucleotide sequence ID" value="NC_012659.1"/>
</dbReference>
<dbReference type="SMR" id="C3P5P2"/>
<dbReference type="GeneID" id="93007271"/>
<dbReference type="KEGG" id="bai:BAA_4003"/>
<dbReference type="HOGENOM" id="CLU_047363_0_1_9"/>
<dbReference type="GO" id="GO:0005829">
    <property type="term" value="C:cytosol"/>
    <property type="evidence" value="ECO:0007669"/>
    <property type="project" value="TreeGrafter"/>
</dbReference>
<dbReference type="GO" id="GO:0052906">
    <property type="term" value="F:tRNA (guanine(37)-N1)-methyltransferase activity"/>
    <property type="evidence" value="ECO:0007669"/>
    <property type="project" value="UniProtKB-UniRule"/>
</dbReference>
<dbReference type="GO" id="GO:0002939">
    <property type="term" value="P:tRNA N1-guanine methylation"/>
    <property type="evidence" value="ECO:0007669"/>
    <property type="project" value="TreeGrafter"/>
</dbReference>
<dbReference type="CDD" id="cd18080">
    <property type="entry name" value="TrmD-like"/>
    <property type="match status" value="1"/>
</dbReference>
<dbReference type="FunFam" id="1.10.1270.20:FF:000001">
    <property type="entry name" value="tRNA (guanine-N(1)-)-methyltransferase"/>
    <property type="match status" value="1"/>
</dbReference>
<dbReference type="FunFam" id="3.40.1280.10:FF:000001">
    <property type="entry name" value="tRNA (guanine-N(1)-)-methyltransferase"/>
    <property type="match status" value="1"/>
</dbReference>
<dbReference type="Gene3D" id="3.40.1280.10">
    <property type="match status" value="1"/>
</dbReference>
<dbReference type="Gene3D" id="1.10.1270.20">
    <property type="entry name" value="tRNA(m1g37)methyltransferase, domain 2"/>
    <property type="match status" value="1"/>
</dbReference>
<dbReference type="HAMAP" id="MF_00605">
    <property type="entry name" value="TrmD"/>
    <property type="match status" value="1"/>
</dbReference>
<dbReference type="InterPro" id="IPR029028">
    <property type="entry name" value="Alpha/beta_knot_MTases"/>
</dbReference>
<dbReference type="InterPro" id="IPR023148">
    <property type="entry name" value="tRNA_m1G_MeTrfase_C_sf"/>
</dbReference>
<dbReference type="InterPro" id="IPR002649">
    <property type="entry name" value="tRNA_m1G_MeTrfase_TrmD"/>
</dbReference>
<dbReference type="InterPro" id="IPR029026">
    <property type="entry name" value="tRNA_m1G_MTases_N"/>
</dbReference>
<dbReference type="InterPro" id="IPR016009">
    <property type="entry name" value="tRNA_MeTrfase_TRMD/TRM10"/>
</dbReference>
<dbReference type="NCBIfam" id="NF000648">
    <property type="entry name" value="PRK00026.1"/>
    <property type="match status" value="1"/>
</dbReference>
<dbReference type="NCBIfam" id="TIGR00088">
    <property type="entry name" value="trmD"/>
    <property type="match status" value="1"/>
</dbReference>
<dbReference type="PANTHER" id="PTHR46417">
    <property type="entry name" value="TRNA (GUANINE-N(1)-)-METHYLTRANSFERASE"/>
    <property type="match status" value="1"/>
</dbReference>
<dbReference type="PANTHER" id="PTHR46417:SF1">
    <property type="entry name" value="TRNA (GUANINE-N(1)-)-METHYLTRANSFERASE"/>
    <property type="match status" value="1"/>
</dbReference>
<dbReference type="Pfam" id="PF01746">
    <property type="entry name" value="tRNA_m1G_MT"/>
    <property type="match status" value="1"/>
</dbReference>
<dbReference type="PIRSF" id="PIRSF000386">
    <property type="entry name" value="tRNA_mtase"/>
    <property type="match status" value="1"/>
</dbReference>
<dbReference type="SUPFAM" id="SSF75217">
    <property type="entry name" value="alpha/beta knot"/>
    <property type="match status" value="1"/>
</dbReference>
<feature type="chain" id="PRO_1000147069" description="tRNA (guanine-N(1)-)-methyltransferase">
    <location>
        <begin position="1"/>
        <end position="244"/>
    </location>
</feature>
<feature type="binding site" evidence="1">
    <location>
        <position position="113"/>
    </location>
    <ligand>
        <name>S-adenosyl-L-methionine</name>
        <dbReference type="ChEBI" id="CHEBI:59789"/>
    </ligand>
</feature>
<feature type="binding site" evidence="1">
    <location>
        <begin position="133"/>
        <end position="138"/>
    </location>
    <ligand>
        <name>S-adenosyl-L-methionine</name>
        <dbReference type="ChEBI" id="CHEBI:59789"/>
    </ligand>
</feature>
<keyword id="KW-0963">Cytoplasm</keyword>
<keyword id="KW-0489">Methyltransferase</keyword>
<keyword id="KW-0949">S-adenosyl-L-methionine</keyword>
<keyword id="KW-0808">Transferase</keyword>
<keyword id="KW-0819">tRNA processing</keyword>
<gene>
    <name evidence="1" type="primary">trmD</name>
    <name type="ordered locus">BAA_4003</name>
</gene>
<comment type="function">
    <text evidence="1">Specifically methylates guanosine-37 in various tRNAs.</text>
</comment>
<comment type="catalytic activity">
    <reaction evidence="1">
        <text>guanosine(37) in tRNA + S-adenosyl-L-methionine = N(1)-methylguanosine(37) in tRNA + S-adenosyl-L-homocysteine + H(+)</text>
        <dbReference type="Rhea" id="RHEA:36899"/>
        <dbReference type="Rhea" id="RHEA-COMP:10145"/>
        <dbReference type="Rhea" id="RHEA-COMP:10147"/>
        <dbReference type="ChEBI" id="CHEBI:15378"/>
        <dbReference type="ChEBI" id="CHEBI:57856"/>
        <dbReference type="ChEBI" id="CHEBI:59789"/>
        <dbReference type="ChEBI" id="CHEBI:73542"/>
        <dbReference type="ChEBI" id="CHEBI:74269"/>
        <dbReference type="EC" id="2.1.1.228"/>
    </reaction>
</comment>
<comment type="subunit">
    <text evidence="1">Homodimer.</text>
</comment>
<comment type="subcellular location">
    <subcellularLocation>
        <location evidence="1">Cytoplasm</location>
    </subcellularLocation>
</comment>
<comment type="similarity">
    <text evidence="1">Belongs to the RNA methyltransferase TrmD family.</text>
</comment>
<organism>
    <name type="scientific">Bacillus anthracis (strain A0248)</name>
    <dbReference type="NCBI Taxonomy" id="592021"/>
    <lineage>
        <taxon>Bacteria</taxon>
        <taxon>Bacillati</taxon>
        <taxon>Bacillota</taxon>
        <taxon>Bacilli</taxon>
        <taxon>Bacillales</taxon>
        <taxon>Bacillaceae</taxon>
        <taxon>Bacillus</taxon>
        <taxon>Bacillus cereus group</taxon>
    </lineage>
</organism>
<reference key="1">
    <citation type="submission" date="2009-04" db="EMBL/GenBank/DDBJ databases">
        <title>Genome sequence of Bacillus anthracis A0248.</title>
        <authorList>
            <person name="Dodson R.J."/>
            <person name="Munk A.C."/>
            <person name="Bruce D."/>
            <person name="Detter C."/>
            <person name="Tapia R."/>
            <person name="Sutton G."/>
            <person name="Sims D."/>
            <person name="Brettin T."/>
        </authorList>
    </citation>
    <scope>NUCLEOTIDE SEQUENCE [LARGE SCALE GENOMIC DNA]</scope>
    <source>
        <strain>A0248</strain>
    </source>
</reference>
<evidence type="ECO:0000255" key="1">
    <source>
        <dbReference type="HAMAP-Rule" id="MF_00605"/>
    </source>
</evidence>
<protein>
    <recommendedName>
        <fullName evidence="1">tRNA (guanine-N(1)-)-methyltransferase</fullName>
        <ecNumber evidence="1">2.1.1.228</ecNumber>
    </recommendedName>
    <alternativeName>
        <fullName evidence="1">M1G-methyltransferase</fullName>
    </alternativeName>
    <alternativeName>
        <fullName evidence="1">tRNA [GM37] methyltransferase</fullName>
    </alternativeName>
</protein>
<proteinExistence type="inferred from homology"/>
<accession>C3P5P2</accession>
<name>TRMD_BACAA</name>